<evidence type="ECO:0000250" key="1">
    <source>
        <dbReference type="UniProtKB" id="P19258"/>
    </source>
</evidence>
<evidence type="ECO:0000255" key="2"/>
<evidence type="ECO:0000269" key="3">
    <source>
    </source>
</evidence>
<evidence type="ECO:0000269" key="4">
    <source>
    </source>
</evidence>
<evidence type="ECO:0000269" key="5">
    <source>
    </source>
</evidence>
<evidence type="ECO:0000269" key="6">
    <source>
    </source>
</evidence>
<evidence type="ECO:0000269" key="7">
    <source>
    </source>
</evidence>
<evidence type="ECO:0000269" key="8">
    <source>
    </source>
</evidence>
<evidence type="ECO:0000269" key="9">
    <source>
    </source>
</evidence>
<evidence type="ECO:0000269" key="10">
    <source>
    </source>
</evidence>
<evidence type="ECO:0000269" key="11">
    <source>
    </source>
</evidence>
<evidence type="ECO:0000269" key="12">
    <source>
    </source>
</evidence>
<evidence type="ECO:0000269" key="13">
    <source>
    </source>
</evidence>
<evidence type="ECO:0000269" key="14">
    <source>
    </source>
</evidence>
<evidence type="ECO:0000269" key="15">
    <source>
    </source>
</evidence>
<evidence type="ECO:0000269" key="16">
    <source>
    </source>
</evidence>
<evidence type="ECO:0000269" key="17">
    <source>
    </source>
</evidence>
<evidence type="ECO:0000269" key="18">
    <source>
    </source>
</evidence>
<evidence type="ECO:0000269" key="19">
    <source>
    </source>
</evidence>
<evidence type="ECO:0000269" key="20">
    <source>
    </source>
</evidence>
<evidence type="ECO:0000269" key="21">
    <source>
    </source>
</evidence>
<evidence type="ECO:0000269" key="22">
    <source>
    </source>
</evidence>
<evidence type="ECO:0000269" key="23">
    <source>
    </source>
</evidence>
<evidence type="ECO:0000305" key="24"/>
<evidence type="ECO:0000312" key="25">
    <source>
        <dbReference type="HGNC" id="HGNC:7224"/>
    </source>
</evidence>
<evidence type="ECO:0000312" key="26">
    <source>
        <dbReference type="Proteomes" id="UP000005640"/>
    </source>
</evidence>
<gene>
    <name evidence="25" type="primary">MPV17</name>
</gene>
<reference key="1">
    <citation type="journal article" date="1993" name="Hum. Mol. Genet.">
        <title>The human homolog of the glomerulosclerosis gene Mpv17: structure and genomic organization.</title>
        <authorList>
            <person name="Karasawa M."/>
            <person name="Zwacka R.M."/>
            <person name="Reuter A."/>
            <person name="Fink T."/>
            <person name="Hsieh C.L."/>
            <person name="Lichter P."/>
            <person name="Francke U."/>
            <person name="Weiher H."/>
        </authorList>
    </citation>
    <scope>NUCLEOTIDE SEQUENCE [GENOMIC DNA / MRNA]</scope>
    <source>
        <tissue>Liver</tissue>
    </source>
</reference>
<reference key="2">
    <citation type="journal article" date="1993" name="Adv. Nephrol. Necker Hosp.">
        <title>Glomerular sclerosis in transgenic mice: the Mpv-17 gene and its human homologue.</title>
        <authorList>
            <person name="Weiher H."/>
        </authorList>
    </citation>
    <scope>NUCLEOTIDE SEQUENCE [MRNA]</scope>
</reference>
<reference key="3">
    <citation type="journal article" date="2011" name="Nucleic Acids Res.">
        <title>Identification of rare DNA variants in mitochondrial disorders with improved array-based sequencing.</title>
        <authorList>
            <person name="Wang W."/>
            <person name="Shen P."/>
            <person name="Thiyagarajan S."/>
            <person name="Lin S."/>
            <person name="Palm C."/>
            <person name="Horvath R."/>
            <person name="Klopstock T."/>
            <person name="Cutler D."/>
            <person name="Pique L."/>
            <person name="Schrijver I."/>
            <person name="Davis R.W."/>
            <person name="Mindrinos M."/>
            <person name="Speed T.P."/>
            <person name="Scharfe C."/>
        </authorList>
    </citation>
    <scope>NUCLEOTIDE SEQUENCE [GENOMIC DNA]</scope>
</reference>
<reference key="4">
    <citation type="journal article" date="2005" name="Nature">
        <title>Generation and annotation of the DNA sequences of human chromosomes 2 and 4.</title>
        <authorList>
            <person name="Hillier L.W."/>
            <person name="Graves T.A."/>
            <person name="Fulton R.S."/>
            <person name="Fulton L.A."/>
            <person name="Pepin K.H."/>
            <person name="Minx P."/>
            <person name="Wagner-McPherson C."/>
            <person name="Layman D."/>
            <person name="Wylie K."/>
            <person name="Sekhon M."/>
            <person name="Becker M.C."/>
            <person name="Fewell G.A."/>
            <person name="Delehaunty K.D."/>
            <person name="Miner T.L."/>
            <person name="Nash W.E."/>
            <person name="Kremitzki C."/>
            <person name="Oddy L."/>
            <person name="Du H."/>
            <person name="Sun H."/>
            <person name="Bradshaw-Cordum H."/>
            <person name="Ali J."/>
            <person name="Carter J."/>
            <person name="Cordes M."/>
            <person name="Harris A."/>
            <person name="Isak A."/>
            <person name="van Brunt A."/>
            <person name="Nguyen C."/>
            <person name="Du F."/>
            <person name="Courtney L."/>
            <person name="Kalicki J."/>
            <person name="Ozersky P."/>
            <person name="Abbott S."/>
            <person name="Armstrong J."/>
            <person name="Belter E.A."/>
            <person name="Caruso L."/>
            <person name="Cedroni M."/>
            <person name="Cotton M."/>
            <person name="Davidson T."/>
            <person name="Desai A."/>
            <person name="Elliott G."/>
            <person name="Erb T."/>
            <person name="Fronick C."/>
            <person name="Gaige T."/>
            <person name="Haakenson W."/>
            <person name="Haglund K."/>
            <person name="Holmes A."/>
            <person name="Harkins R."/>
            <person name="Kim K."/>
            <person name="Kruchowski S.S."/>
            <person name="Strong C.M."/>
            <person name="Grewal N."/>
            <person name="Goyea E."/>
            <person name="Hou S."/>
            <person name="Levy A."/>
            <person name="Martinka S."/>
            <person name="Mead K."/>
            <person name="McLellan M.D."/>
            <person name="Meyer R."/>
            <person name="Randall-Maher J."/>
            <person name="Tomlinson C."/>
            <person name="Dauphin-Kohlberg S."/>
            <person name="Kozlowicz-Reilly A."/>
            <person name="Shah N."/>
            <person name="Swearengen-Shahid S."/>
            <person name="Snider J."/>
            <person name="Strong J.T."/>
            <person name="Thompson J."/>
            <person name="Yoakum M."/>
            <person name="Leonard S."/>
            <person name="Pearman C."/>
            <person name="Trani L."/>
            <person name="Radionenko M."/>
            <person name="Waligorski J.E."/>
            <person name="Wang C."/>
            <person name="Rock S.M."/>
            <person name="Tin-Wollam A.-M."/>
            <person name="Maupin R."/>
            <person name="Latreille P."/>
            <person name="Wendl M.C."/>
            <person name="Yang S.-P."/>
            <person name="Pohl C."/>
            <person name="Wallis J.W."/>
            <person name="Spieth J."/>
            <person name="Bieri T.A."/>
            <person name="Berkowicz N."/>
            <person name="Nelson J.O."/>
            <person name="Osborne J."/>
            <person name="Ding L."/>
            <person name="Meyer R."/>
            <person name="Sabo A."/>
            <person name="Shotland Y."/>
            <person name="Sinha P."/>
            <person name="Wohldmann P.E."/>
            <person name="Cook L.L."/>
            <person name="Hickenbotham M.T."/>
            <person name="Eldred J."/>
            <person name="Williams D."/>
            <person name="Jones T.A."/>
            <person name="She X."/>
            <person name="Ciccarelli F.D."/>
            <person name="Izaurralde E."/>
            <person name="Taylor J."/>
            <person name="Schmutz J."/>
            <person name="Myers R.M."/>
            <person name="Cox D.R."/>
            <person name="Huang X."/>
            <person name="McPherson J.D."/>
            <person name="Mardis E.R."/>
            <person name="Clifton S.W."/>
            <person name="Warren W.C."/>
            <person name="Chinwalla A.T."/>
            <person name="Eddy S.R."/>
            <person name="Marra M.A."/>
            <person name="Ovcharenko I."/>
            <person name="Furey T.S."/>
            <person name="Miller W."/>
            <person name="Eichler E.E."/>
            <person name="Bork P."/>
            <person name="Suyama M."/>
            <person name="Torrents D."/>
            <person name="Waterston R.H."/>
            <person name="Wilson R.K."/>
        </authorList>
    </citation>
    <scope>NUCLEOTIDE SEQUENCE [LARGE SCALE GENOMIC DNA]</scope>
</reference>
<reference key="5">
    <citation type="submission" date="2005-09" db="EMBL/GenBank/DDBJ databases">
        <authorList>
            <person name="Mural R.J."/>
            <person name="Istrail S."/>
            <person name="Sutton G.G."/>
            <person name="Florea L."/>
            <person name="Halpern A.L."/>
            <person name="Mobarry C.M."/>
            <person name="Lippert R."/>
            <person name="Walenz B."/>
            <person name="Shatkay H."/>
            <person name="Dew I."/>
            <person name="Miller J.R."/>
            <person name="Flanigan M.J."/>
            <person name="Edwards N.J."/>
            <person name="Bolanos R."/>
            <person name="Fasulo D."/>
            <person name="Halldorsson B.V."/>
            <person name="Hannenhalli S."/>
            <person name="Turner R."/>
            <person name="Yooseph S."/>
            <person name="Lu F."/>
            <person name="Nusskern D.R."/>
            <person name="Shue B.C."/>
            <person name="Zheng X.H."/>
            <person name="Zhong F."/>
            <person name="Delcher A.L."/>
            <person name="Huson D.H."/>
            <person name="Kravitz S.A."/>
            <person name="Mouchard L."/>
            <person name="Reinert K."/>
            <person name="Remington K.A."/>
            <person name="Clark A.G."/>
            <person name="Waterman M.S."/>
            <person name="Eichler E.E."/>
            <person name="Adams M.D."/>
            <person name="Hunkapiller M.W."/>
            <person name="Myers E.W."/>
            <person name="Venter J.C."/>
        </authorList>
    </citation>
    <scope>NUCLEOTIDE SEQUENCE [LARGE SCALE GENOMIC DNA]</scope>
</reference>
<reference key="6">
    <citation type="journal article" date="2004" name="Genome Res.">
        <title>The status, quality, and expansion of the NIH full-length cDNA project: the Mammalian Gene Collection (MGC).</title>
        <authorList>
            <consortium name="The MGC Project Team"/>
        </authorList>
    </citation>
    <scope>NUCLEOTIDE SEQUENCE [LARGE SCALE MRNA]</scope>
    <source>
        <tissue>Skin</tissue>
    </source>
</reference>
<reference key="7">
    <citation type="journal article" date="2006" name="Nat. Genet.">
        <title>Systematic identification of human mitochondrial disease genes through integrative genomics.</title>
        <authorList>
            <person name="Calvo S."/>
            <person name="Jain M."/>
            <person name="Xie X."/>
            <person name="Sheth S.A."/>
            <person name="Chang B."/>
            <person name="Goldberger O.A."/>
            <person name="Spinazzola A."/>
            <person name="Zeviani M."/>
            <person name="Carr S.A."/>
            <person name="Mootha V.K."/>
        </authorList>
    </citation>
    <scope>SUBCELLULAR LOCATION</scope>
    <scope>INVOLVEMENT IN MTDPS6</scope>
</reference>
<reference key="8">
    <citation type="journal article" date="2015" name="J. Biol. Chem.">
        <title>The human mitochondrial DNA depletion syndrome gene MPV17 encodes a non-selective channel that modulates membrane potential.</title>
        <authorList>
            <person name="Antonenkov V.D."/>
            <person name="Isomursu A."/>
            <person name="Mennerich D."/>
            <person name="Vapola M.H."/>
            <person name="Weiher H."/>
            <person name="Kietzmann T."/>
            <person name="Hiltunen J.K."/>
        </authorList>
    </citation>
    <scope>FUNCTION</scope>
    <scope>MUTAGENESIS OF THR-80; ASP-92 AND CYS-99</scope>
    <scope>CHARACTERIZATION OF VARIANT MTDPS6 LEU-98</scope>
</reference>
<reference key="9">
    <citation type="journal article" date="2015" name="Proteomics">
        <title>N-terminome analysis of the human mitochondrial proteome.</title>
        <authorList>
            <person name="Vaca Jacome A.S."/>
            <person name="Rabilloud T."/>
            <person name="Schaeffer-Reiss C."/>
            <person name="Rompais M."/>
            <person name="Ayoub D."/>
            <person name="Lane L."/>
            <person name="Bairoch A."/>
            <person name="Van Dorsselaer A."/>
            <person name="Carapito C."/>
        </authorList>
    </citation>
    <scope>IDENTIFICATION BY MASS SPECTROMETRY [LARGE SCALE ANALYSIS]</scope>
</reference>
<reference key="10">
    <citation type="journal article" date="2016" name="PLoS Genet.">
        <title>MPV17 loss causes deoxynucleotide insufficiency and slow DNA replication in mitochondria.</title>
        <authorList>
            <person name="Dalla Rosa I."/>
            <person name="Camara Y."/>
            <person name="Durigon R."/>
            <person name="Moss C.F."/>
            <person name="Vidoni S."/>
            <person name="Akman G."/>
            <person name="Hunt L."/>
            <person name="Johnson M.A."/>
            <person name="Grocott S."/>
            <person name="Wang L."/>
            <person name="Thorburn D.R."/>
            <person name="Hirano M."/>
            <person name="Poulton J."/>
            <person name="Taylor R.W."/>
            <person name="Elgar G."/>
            <person name="Marti R."/>
            <person name="Voshol P."/>
            <person name="Holt I.J."/>
            <person name="Spinazzola A."/>
        </authorList>
    </citation>
    <scope>FUNCTION</scope>
</reference>
<reference key="11">
    <citation type="journal article" date="2006" name="Nat. Genet.">
        <title>MPV17 encodes an inner mitochondrial membrane protein and is mutated in infantile hepatic mitochondrial DNA depletion.</title>
        <authorList>
            <person name="Spinazzola A."/>
            <person name="Viscomi C."/>
            <person name="Fernandez-Vizarra E."/>
            <person name="Carrara F."/>
            <person name="D'Adamo P."/>
            <person name="Calvo S."/>
            <person name="Marsano R.M."/>
            <person name="Donnini C."/>
            <person name="Weiher H."/>
            <person name="Strisciuglio P."/>
            <person name="Parini R."/>
            <person name="Sarzi E."/>
            <person name="Chan A."/>
            <person name="Dimauro S."/>
            <person name="Rotig A."/>
            <person name="Gasparini P."/>
            <person name="Ferrero I."/>
            <person name="Mootha V.K."/>
            <person name="Tiranti V."/>
            <person name="Zeviani M."/>
        </authorList>
    </citation>
    <scope>VARIANTS MTDPS6 TRP-50; GLN-50 AND LYS-166</scope>
    <scope>SUBCELLULAR LOCATION</scope>
    <scope>TISSUE SPECIFICITY</scope>
</reference>
<reference key="12">
    <citation type="journal article" date="2006" name="Am. J. Hum. Genet.">
        <title>Navajo neurohepatopathy is caused by a mutation in the MPV17 gene.</title>
        <authorList>
            <person name="Karadimas C.L."/>
            <person name="Vu T.H."/>
            <person name="Holve S.A."/>
            <person name="Chronopoulou P."/>
            <person name="Quinzii C."/>
            <person name="Johnsen S.D."/>
            <person name="Kurth J."/>
            <person name="Eggers E."/>
            <person name="Palenzuela L."/>
            <person name="Tanji K."/>
            <person name="Bonilla E."/>
            <person name="De Vivo D.C."/>
            <person name="DiMauro S."/>
            <person name="Hirano M."/>
        </authorList>
    </citation>
    <scope>VARIANT MTDPS6 GLN-50</scope>
</reference>
<reference key="13">
    <citation type="journal article" date="2007" name="Hepatology">
        <title>Mutations in the MPV17 gene are responsible for rapidly progressive liver failure in infancy.</title>
        <authorList>
            <person name="Wong L.J."/>
            <person name="Brunetti-Pierri N."/>
            <person name="Zhang Q."/>
            <person name="Yazigi N."/>
            <person name="Bove K.E."/>
            <person name="Dahms B.B."/>
            <person name="Puchowicz M.A."/>
            <person name="Gonzalez-Gomez I."/>
            <person name="Schmitt E.S."/>
            <person name="Truong C.K."/>
            <person name="Hoppel C.L."/>
            <person name="Chou P.C."/>
            <person name="Wang J."/>
            <person name="Baldwin E.E."/>
            <person name="Adams D."/>
            <person name="Leslie N."/>
            <person name="Boles R.G."/>
            <person name="Kerr D.S."/>
            <person name="Craigen W.J."/>
        </authorList>
    </citation>
    <scope>VARIANTS MTDPS6 TRP-50; 69-TRP--LEU-176 DEL; 79-GLY--THR-81 DEL AND LYS-88 DEL</scope>
</reference>
<reference key="14">
    <citation type="journal article" date="2008" name="Arch. Neurol.">
        <title>Hepatocerebral form of mitochondrial DNA depletion syndrome: novel MPV17 mutations.</title>
        <authorList>
            <person name="Spinazzola A."/>
            <person name="Santer R."/>
            <person name="Akman O.H."/>
            <person name="Tsiakas K."/>
            <person name="Schaefer H."/>
            <person name="Ding X."/>
            <person name="Karadimas C.L."/>
            <person name="Shanske S."/>
            <person name="Ganesh J."/>
            <person name="Di Mauro S."/>
            <person name="Zeviani M."/>
        </authorList>
    </citation>
    <scope>VARIANTS MTDPS6 TRP-24 AND 120-TRP--LEU-176 DEL</scope>
</reference>
<reference key="15">
    <citation type="journal article" date="2009" name="Mol. Genet. Metab.">
        <title>Fluctuating liver functions in siblings with MPV17 mutations and possible improvement associated with dietary and pharmaceutical treatments targeting respiratory chain complex II.</title>
        <authorList>
            <person name="Kaji S."/>
            <person name="Murayama K."/>
            <person name="Nagata I."/>
            <person name="Nagasaka H."/>
            <person name="Takayanagi M."/>
            <person name="Ohtake A."/>
            <person name="Iwasa H."/>
            <person name="Nishiyama M."/>
            <person name="Okazaki Y."/>
            <person name="Harashima H."/>
            <person name="Eitoku T."/>
            <person name="Yamamoto M."/>
            <person name="Matsushita H."/>
            <person name="Kitamoto K."/>
            <person name="Sakata S."/>
            <person name="Katayama T."/>
            <person name="Sugimoto S."/>
            <person name="Fujimoto Y."/>
            <person name="Murakami J."/>
            <person name="Kanzaki S."/>
            <person name="Shiraki K."/>
        </authorList>
    </citation>
    <scope>VARIANT MTDPS6 PHE-170</scope>
</reference>
<reference key="16">
    <citation type="journal article" date="2010" name="Mol. Genet. Metab.">
        <title>MPV17-associated hepatocerebral mitochondrial DNA depletion syndrome: new patients and novel mutations.</title>
        <authorList>
            <person name="El-Hattab A.W."/>
            <person name="Li F.Y."/>
            <person name="Schmitt E."/>
            <person name="Zhang S."/>
            <person name="Craigen W.J."/>
            <person name="Wong L.J."/>
        </authorList>
    </citation>
    <scope>VARIANTS MTDPS6 GLN-50; GLU-88; LYS-88 DEL; LEU-91 DEL; ARG-94; LEU-98 AND ASP-162</scope>
</reference>
<reference key="17">
    <citation type="journal article" date="2012" name="Neuromuscul. Disord.">
        <title>MPV17 mutation causes neuropathy and leukoencephalopathy with multiple mtDNA deletions in muscle.</title>
        <authorList>
            <person name="Blakely E.L."/>
            <person name="Butterworth A."/>
            <person name="Hadden R.D."/>
            <person name="Bodi I."/>
            <person name="He L."/>
            <person name="McFarland R."/>
            <person name="Taylor R.W."/>
        </authorList>
    </citation>
    <scope>VARIANT CMT2EE LEU-98</scope>
</reference>
<reference key="18">
    <citation type="journal article" date="2014" name="Clin. Genet.">
        <title>Novel c.191C&gt;G (p.Pro64Arg) MPV17 mutation identified in two pairs of unrelated Polish siblings with mitochondrial hepatoencephalopathy.</title>
        <authorList>
            <person name="Piekutowska-Abramczuk D."/>
            <person name="Pronicki M."/>
            <person name="Strawa K."/>
            <person name="Karkucinska-Wieckowska A."/>
            <person name="Szymanska-Debinska T."/>
            <person name="Fidzianska A."/>
            <person name="Wieckowski M.R."/>
            <person name="Jurkiewicz D."/>
            <person name="Ciara E."/>
            <person name="Jankowska I."/>
            <person name="Sykut-Cegielska J."/>
            <person name="Krajewska-Walasek M."/>
            <person name="Ploski R."/>
            <person name="Pronicka E."/>
        </authorList>
    </citation>
    <scope>VARIANT MTDPS6 ARG-64</scope>
</reference>
<reference key="19">
    <citation type="journal article" date="2014" name="Eur. J. Hum. Genet.">
        <title>Clinical, biochemical, cellular and molecular characterization of mitochondrial DNA depletion syndrome due to novel mutations in the MPV17 gene.</title>
        <authorList>
            <person name="Uusimaa J."/>
            <person name="Evans J."/>
            <person name="Smith C."/>
            <person name="Butterworth A."/>
            <person name="Craig K."/>
            <person name="Ashley N."/>
            <person name="Liao C."/>
            <person name="Carver J."/>
            <person name="Diot A."/>
            <person name="Macleod L."/>
            <person name="Hargreaves I."/>
            <person name="Al-Hussaini A."/>
            <person name="Faqeih E."/>
            <person name="Asery A."/>
            <person name="Al Balwi M."/>
            <person name="Eyaid W."/>
            <person name="Al-Sunaid A."/>
            <person name="Kelly D."/>
            <person name="van Mourik I."/>
            <person name="Ball S."/>
            <person name="Jarvis J."/>
            <person name="Mulay A."/>
            <person name="Hadzic N."/>
            <person name="Samyn M."/>
            <person name="Baker A."/>
            <person name="Rahman S."/>
            <person name="Stewart H."/>
            <person name="Morris A.A."/>
            <person name="Seller A."/>
            <person name="Fratter C."/>
            <person name="Taylor R.W."/>
            <person name="Poulton J."/>
        </authorList>
    </citation>
    <scope>VARIANTS MTDPS6 ARG-21; PRO-23; PRO-36; TRP-41; 44-GLN--LEU-176 DEL; ARG-64; PRO-93 AND LEU-98</scope>
</reference>
<reference key="20">
    <citation type="journal article" date="2014" name="Indian Pediatr.">
        <title>Mitochondrial DNA depletion syndrome causing liver failure.</title>
        <authorList>
            <person name="Bijarnia-Mahay S."/>
            <person name="Mohan N."/>
            <person name="Goyal D."/>
            <person name="Verma I.C."/>
        </authorList>
    </citation>
    <scope>VARIANTS MTDPS6 LEU-98 AND 136-TYR--LEU-176 DEL</scope>
</reference>
<reference key="21">
    <citation type="journal article" date="2014" name="JIMD Rep.">
        <title>Adult-onset fatal neurohepatopathy in a woman caused by MPV17 mutation.</title>
        <authorList>
            <person name="Mendelsohn B.A."/>
            <person name="Mehta N."/>
            <person name="Hameed B."/>
            <person name="Pekmezci M."/>
            <person name="Packman S."/>
            <person name="Ralph J."/>
        </authorList>
    </citation>
    <scope>VARIANT CMT2EE LEU-98</scope>
</reference>
<reference key="22">
    <citation type="journal article" date="2015" name="BMC Neurol.">
        <title>A novel homozygous MPV17 mutation in two families with axonal sensorimotor polyneuropathy.</title>
        <authorList>
            <person name="Choi Y.R."/>
            <person name="Hong Y.B."/>
            <person name="Jung S.C."/>
            <person name="Lee J.H."/>
            <person name="Kim Y.J."/>
            <person name="Park H.J."/>
            <person name="Lee J."/>
            <person name="Koo H."/>
            <person name="Lee J.S."/>
            <person name="Jwa D.H."/>
            <person name="Jung N."/>
            <person name="Woo S.Y."/>
            <person name="Kim S.B."/>
            <person name="Chung K.W."/>
            <person name="Choi B.O."/>
        </authorList>
    </citation>
    <scope>VARIANT CMT2EE GLN-41</scope>
    <scope>INVOLVEMENT IN CMT2EE</scope>
</reference>
<reference key="23">
    <citation type="journal article" date="2016" name="Mol. Genet. Metab. Rep.">
        <title>MPV17 mutations in patients with hepatocerebral mitochondrial DNA depletion syndrome.</title>
        <authorList>
            <person name="Kim J."/>
            <person name="Kang E."/>
            <person name="Kim Y."/>
            <person name="Kim J.M."/>
            <person name="Lee B.H."/>
            <person name="Murayama K."/>
            <person name="Kim G.H."/>
            <person name="Choi I.H."/>
            <person name="Kim K.M."/>
            <person name="Yoo H.W."/>
        </authorList>
    </citation>
    <scope>VARIANTS MTDPS6 GLU-66; ARG-94 AND LEU-98</scope>
</reference>
<reference key="24">
    <citation type="journal article" date="2016" name="PLoS Genet.">
        <title>A comprehensive genomic analysis reveals the genetic landscape of mitochondrial respiratory chain complex deficiencies.</title>
        <authorList>
            <person name="Kohda M."/>
            <person name="Tokuzawa Y."/>
            <person name="Kishita Y."/>
            <person name="Nyuzuki H."/>
            <person name="Moriyama Y."/>
            <person name="Mizuno Y."/>
            <person name="Hirata T."/>
            <person name="Yatsuka Y."/>
            <person name="Yamashita-Sugahara Y."/>
            <person name="Nakachi Y."/>
            <person name="Kato H."/>
            <person name="Okuda A."/>
            <person name="Tamaru S."/>
            <person name="Borna N.N."/>
            <person name="Banshoya K."/>
            <person name="Aigaki T."/>
            <person name="Sato-Miyata Y."/>
            <person name="Ohnuma K."/>
            <person name="Suzuki T."/>
            <person name="Nagao A."/>
            <person name="Maehata H."/>
            <person name="Matsuda F."/>
            <person name="Higasa K."/>
            <person name="Nagasaki M."/>
            <person name="Yasuda J."/>
            <person name="Yamamoto M."/>
            <person name="Fushimi T."/>
            <person name="Shimura M."/>
            <person name="Kaiho-Ichimoto K."/>
            <person name="Harashima H."/>
            <person name="Yamazaki T."/>
            <person name="Mori M."/>
            <person name="Murayama K."/>
            <person name="Ohtake A."/>
            <person name="Okazaki Y."/>
        </authorList>
    </citation>
    <scope>VARIANT MTDPS6 LEU-98</scope>
</reference>
<reference key="25">
    <citation type="journal article" date="2017" name="PLoS Genet.">
        <title>Nucleotide pools dictate the identity and frequency of ribonucleotide incorporation in mitochondrial DNA.</title>
        <authorList>
            <person name="Berglund A.K."/>
            <person name="Navarrete C."/>
            <person name="Engqvist M.K."/>
            <person name="Hoberg E."/>
            <person name="Szilagyi Z."/>
            <person name="Taylor R.W."/>
            <person name="Gustafsson C.M."/>
            <person name="Falkenberg M."/>
            <person name="Clausen A.R."/>
        </authorList>
    </citation>
    <scope>CHARACTERIZATION OF VARIANTS MTDPS6 PRO-23 AND PRO-93</scope>
</reference>
<reference key="26">
    <citation type="journal article" date="2018" name="Hum. Mutat.">
        <title>MPV17-related mitochondrial DNA maintenance defect: New cases and review of clinical, biochemical, and molecular aspects.</title>
        <authorList>
            <person name="El-Hattab A.W."/>
            <person name="Wang J."/>
            <person name="Dai H."/>
            <person name="Almannai M."/>
            <person name="Staufner C."/>
            <person name="Alfadhel M."/>
            <person name="Gambello M.J."/>
            <person name="Prasun P."/>
            <person name="Raza S."/>
            <person name="Lyons H.J."/>
            <person name="Afqi M."/>
            <person name="Saleh M.A.M."/>
            <person name="Faqeih E.A."/>
            <person name="Alzaidan H.I."/>
            <person name="Alshenqiti A."/>
            <person name="Flore L.A."/>
            <person name="Hertecant J."/>
            <person name="Sacharow S."/>
            <person name="Barbouth D.S."/>
            <person name="Murayama K."/>
            <person name="Shah A.A."/>
            <person name="Lin H.C."/>
            <person name="Wong L.C."/>
        </authorList>
    </citation>
    <scope>VARIANTS MTDPS6 ARG-21; TRP-50; LYS-88 DEL; LEU-91 DEL; GLY-92; PRO-93; ASP-95; LEU-98; 99-CYS--LEU-176 DEL AND MET-154</scope>
</reference>
<reference key="27">
    <citation type="journal article" date="2019" name="Clin. Genet.">
        <title>MPV17 mutations in juvenile- and adult-onset axonal sensorimotor polyneuropathy.</title>
        <authorList>
            <person name="Baumann M."/>
            <person name="Schreiber H."/>
            <person name="Schlotter-Weigel B."/>
            <person name="Loescher W.N."/>
            <person name="Stucka R."/>
            <person name="Karall D."/>
            <person name="Strom T.M."/>
            <person name="Bauer P."/>
            <person name="Krabichler B."/>
            <person name="Fauth C."/>
            <person name="Glaeser D."/>
            <person name="Senderek J."/>
        </authorList>
    </citation>
    <scope>VARIANT CMT2EE GLN-41</scope>
    <scope>INVOLVEMENT IN CMT2EE</scope>
</reference>
<reference key="28">
    <citation type="journal article" date="2019" name="Dis. Model. Mech.">
        <title>The zebrafish orthologue of the human hepatocerebral disease gene MPV17 plays pleiotropic roles in mitochondria.</title>
        <authorList>
            <person name="Martorano L."/>
            <person name="Peron M."/>
            <person name="Laquatra C."/>
            <person name="Lidron E."/>
            <person name="Facchinello N."/>
            <person name="Meneghetti G."/>
            <person name="Tiso N."/>
            <person name="Rasola A."/>
            <person name="Ghezzi D."/>
            <person name="Argenton F."/>
        </authorList>
    </citation>
    <scope>CHARACTERIZATION OF VARIANT MTDPS6 GLN-50</scope>
</reference>
<protein>
    <recommendedName>
        <fullName evidence="25">Mitochondrial inner membrane protein Mpv17</fullName>
    </recommendedName>
    <alternativeName>
        <fullName>Protein Mpv17</fullName>
    </alternativeName>
</protein>
<proteinExistence type="evidence at protein level"/>
<comment type="function">
    <text evidence="1 15 18">Non-selective channel that modulates the membrane potential under normal conditions and oxidative stress, and is involved in mitochondrial homeostasis (PubMed:25861990). Involved in mitochondrial deoxynucleoside triphosphates (dNTP) pool homeostasis and mitochondrial DNA (mtDNA) maintenance (PubMed:26760297). May be involved in the regulation of reactive oxygen species metabolism and the control of oxidative phosphorylation (By similarity).</text>
</comment>
<comment type="subcellular location">
    <subcellularLocation>
        <location evidence="3 4">Mitochondrion inner membrane</location>
        <topology evidence="3 4">Multi-pass membrane protein</topology>
    </subcellularLocation>
</comment>
<comment type="tissue specificity">
    <text evidence="4">Ubiquitous. Expressed in pancreas, kidney, muscle, liver, lung, placenta, brain and heart.</text>
</comment>
<comment type="disease" evidence="3 4 5 6 7 8 9 11 12 14 15 17 19 20 21 23">
    <disease id="DI-03020">
        <name>Mitochondrial DNA depletion syndrome 6</name>
        <acronym>MTDPS6</acronym>
        <description>A disease due to mitochondrial dysfunction. It is characterized by infantile onset of progressive liver failure, often leading to death in the first year of life, peripheral neuropathy, corneal scarring, acral ulceration and osteomyelitis leading to autoamputation, cerebral leukoencephalopathy, failure to thrive, and recurrent metabolic acidosis with intercurrent infections.</description>
        <dbReference type="MIM" id="256810"/>
    </disease>
    <text>The disease is caused by variants affecting the gene represented in this entry.</text>
</comment>
<comment type="disease" evidence="10 13 16 22">
    <disease id="DI-05543">
        <name>Charcot-Marie-Tooth disease, axonal, type 2EE</name>
        <acronym>CMT2EE</acronym>
        <description>A recessive axonal form of Charcot-Marie-Tooth disease, a disorder of the peripheral nervous system, characterized by progressive weakness and atrophy, initially of the peroneal muscles and later of the distal muscles of the arms. Charcot-Marie-Tooth disease is classified in two main groups on the basis of electrophysiologic properties and histopathology: primary peripheral demyelinating neuropathies (designated CMT1 when they are dominantly inherited) and primary peripheral axonal neuropathies (CMT2). Neuropathies of the CMT2 group are characterized by signs of axonal degeneration in the absence of obvious myelin alterations, normal or slightly reduced nerve conduction velocities, and progressive distal muscle weakness and atrophy. CMT2EE is a slowly progressive, sensorimotor peripheral axonal neuropathy with onset in the first or second decades of life. The disorder primarily affects the lower limbs, sometimes resulting in loss of ambulation, with later onset of upper limb involvement.</description>
        <dbReference type="MIM" id="618400"/>
    </disease>
    <text>The disease is caused by variants affecting the gene represented in this entry.</text>
</comment>
<comment type="similarity">
    <text evidence="24">Belongs to the peroxisomal membrane protein PXMP2/4 family.</text>
</comment>
<organism evidence="26">
    <name type="scientific">Homo sapiens</name>
    <name type="common">Human</name>
    <dbReference type="NCBI Taxonomy" id="9606"/>
    <lineage>
        <taxon>Eukaryota</taxon>
        <taxon>Metazoa</taxon>
        <taxon>Chordata</taxon>
        <taxon>Craniata</taxon>
        <taxon>Vertebrata</taxon>
        <taxon>Euteleostomi</taxon>
        <taxon>Mammalia</taxon>
        <taxon>Eutheria</taxon>
        <taxon>Euarchontoglires</taxon>
        <taxon>Primates</taxon>
        <taxon>Haplorrhini</taxon>
        <taxon>Catarrhini</taxon>
        <taxon>Hominidae</taxon>
        <taxon>Homo</taxon>
    </lineage>
</organism>
<sequence length="176" mass="19733">MALWRAYQRALAAHPWKVQVLTAGSLMGLGDIISQQLVERRGLQEHQRGRTLTMVSLGCGFVGPVVGGWYKVLDRFIPGTTKVDALKKMLLDQGGFAPCFLGCFLPLVGALNGLSAQDNWAKLQRDYPDALITNYYLWPAVQLANFYLVPLHYRLAVVQCVAVIWNSYLSWKAHRL</sequence>
<name>MPV17_HUMAN</name>
<feature type="chain" id="PRO_0000218927" description="Mitochondrial inner membrane protein Mpv17">
    <location>
        <begin position="1"/>
        <end position="176"/>
    </location>
</feature>
<feature type="transmembrane region" description="Helical" evidence="2">
    <location>
        <begin position="18"/>
        <end position="38"/>
    </location>
</feature>
<feature type="transmembrane region" description="Helical" evidence="2">
    <location>
        <begin position="53"/>
        <end position="73"/>
    </location>
</feature>
<feature type="transmembrane region" description="Helical" evidence="2">
    <location>
        <begin position="94"/>
        <end position="114"/>
    </location>
</feature>
<feature type="transmembrane region" description="Helical" evidence="2">
    <location>
        <begin position="131"/>
        <end position="151"/>
    </location>
</feature>
<feature type="site" description="Determines ion selectivity" evidence="15">
    <location>
        <position position="92"/>
    </location>
</feature>
<feature type="sequence variant" id="VAR_082226" description="In MTDPS6; uncertain significance; dbSNP:rs976220715." evidence="11 21">
    <original>L</original>
    <variation>R</variation>
    <location>
        <position position="21"/>
    </location>
</feature>
<feature type="sequence variant" id="VAR_082227" description="In MTDPS6; results in altered ribonucleotide incorporation in mtDNA from patient fibroblasts." evidence="11 20">
    <original>A</original>
    <variation>P</variation>
    <location>
        <position position="23"/>
    </location>
</feature>
<feature type="sequence variant" id="VAR_082228" description="In MTDPS6; uncertain significance; dbSNP:rs121909725." evidence="7">
    <original>G</original>
    <variation>W</variation>
    <location>
        <position position="24"/>
    </location>
</feature>
<feature type="sequence variant" id="VAR_082229" description="In MTDPS6; uncertain significance; dbSNP:rs762327729." evidence="11">
    <original>Q</original>
    <variation>P</variation>
    <location>
        <position position="36"/>
    </location>
</feature>
<feature type="sequence variant" id="VAR_082230" description="In CMT2EE; dbSNP:rs140992482." evidence="16 22">
    <original>R</original>
    <variation>Q</variation>
    <location>
        <position position="41"/>
    </location>
</feature>
<feature type="sequence variant" id="VAR_082231" description="In MTDPS6; dbSNP:rs863224072." evidence="11">
    <original>R</original>
    <variation>W</variation>
    <location>
        <position position="41"/>
    </location>
</feature>
<feature type="sequence variant" id="VAR_082232" description="In MTDPS6." evidence="11">
    <location>
        <begin position="44"/>
        <end position="176"/>
    </location>
</feature>
<feature type="sequence variant" id="VAR_026217" description="In MTDPS6; does not completely rescue iridophores loss in zebrafish 'tra' mutants; may cause protein instability and decay; dbSNP:rs121909721." evidence="4 5 9 23">
    <original>R</original>
    <variation>Q</variation>
    <location>
        <position position="50"/>
    </location>
</feature>
<feature type="sequence variant" id="VAR_026218" description="In MTDPS6; dbSNP:rs121909723." evidence="4 6 21">
    <original>R</original>
    <variation>W</variation>
    <location>
        <position position="50"/>
    </location>
</feature>
<feature type="sequence variant" id="VAR_082233" description="In MTDPS6; dbSNP:rs375401970." evidence="11 12">
    <original>P</original>
    <variation>R</variation>
    <location>
        <position position="64"/>
    </location>
</feature>
<feature type="sequence variant" id="VAR_082234" description="In MTDPS6; uncertain significance." evidence="19">
    <original>V</original>
    <variation>E</variation>
    <location>
        <position position="66"/>
    </location>
</feature>
<feature type="sequence variant" id="VAR_082235" description="In MTDPS6." evidence="6">
    <location>
        <begin position="69"/>
        <end position="176"/>
    </location>
</feature>
<feature type="sequence variant" id="VAR_082236" description="In MTDPS6; uncertain significance." evidence="6">
    <location>
        <begin position="79"/>
        <end position="81"/>
    </location>
</feature>
<feature type="sequence variant" id="VAR_076199" description="In MTDPS6; dbSNP:rs267607256." evidence="9">
    <original>K</original>
    <variation>E</variation>
    <location>
        <position position="88"/>
    </location>
</feature>
<feature type="sequence variant" id="VAR_076200" description="In MTDPS6." evidence="6 9 21">
    <location>
        <position position="88"/>
    </location>
</feature>
<feature type="sequence variant" id="VAR_076201" description="In MTDPS6." evidence="9 21">
    <location>
        <position position="91"/>
    </location>
</feature>
<feature type="sequence variant" id="VAR_082237" description="In MTDPS6." evidence="21">
    <original>D</original>
    <variation>G</variation>
    <location>
        <position position="92"/>
    </location>
</feature>
<feature type="sequence variant" id="VAR_082238" description="In MTDPS6; results in altered ribonucleotide incorporation in mtDNA from patient fibroblasts." evidence="11 21">
    <original>Q</original>
    <variation>P</variation>
    <location>
        <position position="93"/>
    </location>
</feature>
<feature type="sequence variant" id="VAR_076202" description="In MTDPS6; dbSNP:rs267607257." evidence="9 19">
    <original>G</original>
    <variation>R</variation>
    <location>
        <position position="94"/>
    </location>
</feature>
<feature type="sequence variant" id="VAR_082239" description="In MTDPS6; uncertain significance; dbSNP:rs1260392202." evidence="21">
    <original>G</original>
    <variation>D</variation>
    <location>
        <position position="95"/>
    </location>
</feature>
<feature type="sequence variant" id="VAR_076203" description="In MTDPS6 and CMT2EE; results in incomplete closing of the channel; dbSNP:rs267607258." evidence="9 10 11 13 14 15 17 19 21">
    <original>P</original>
    <variation>L</variation>
    <location>
        <position position="98"/>
    </location>
</feature>
<feature type="sequence variant" id="VAR_082240" description="In MTDPS6." evidence="21">
    <location>
        <begin position="99"/>
        <end position="176"/>
    </location>
</feature>
<feature type="sequence variant" id="VAR_082241" description="In MTDPS6." evidence="7">
    <location>
        <begin position="120"/>
        <end position="176"/>
    </location>
</feature>
<feature type="sequence variant" id="VAR_082242" description="In MTDPS6." evidence="14">
    <location>
        <begin position="136"/>
        <end position="176"/>
    </location>
</feature>
<feature type="sequence variant" id="VAR_082243" description="In MTDPS6; dbSNP:rs886044113." evidence="21">
    <original>R</original>
    <variation>M</variation>
    <location>
        <position position="154"/>
    </location>
</feature>
<feature type="sequence variant" id="VAR_076204" description="In MTDPS6; dbSNP:rs267607259." evidence="9">
    <original>A</original>
    <variation>D</variation>
    <location>
        <position position="162"/>
    </location>
</feature>
<feature type="sequence variant" id="VAR_026219" description="In MTDPS6; dbSNP:rs121909722." evidence="4">
    <original>N</original>
    <variation>K</variation>
    <location>
        <position position="166"/>
    </location>
</feature>
<feature type="sequence variant" id="VAR_082244" description="In MTDPS6; dbSNP:rs267607260." evidence="8">
    <original>S</original>
    <variation>F</variation>
    <location>
        <position position="170"/>
    </location>
</feature>
<feature type="mutagenesis site" description="Does not affect gating properties of the channel." evidence="15">
    <original>T</original>
    <variation>A</variation>
    <location>
        <position position="80"/>
    </location>
</feature>
<feature type="mutagenesis site" description="Affects ion selectivity of the channel." evidence="15">
    <original>D</original>
    <variation>K</variation>
    <location>
        <position position="92"/>
    </location>
</feature>
<feature type="mutagenesis site" description="Does not affect conductance and gating properties of the channel." evidence="15">
    <original>C</original>
    <variation>A</variation>
    <location>
        <position position="99"/>
    </location>
</feature>
<accession>P39210</accession>
<accession>D6W555</accession>
<accession>Q53SY2</accession>
<accession>Q96B08</accession>
<dbReference type="EMBL" id="S68430">
    <property type="protein sequence ID" value="AAD14014.1"/>
    <property type="molecule type" value="Genomic_DNA"/>
</dbReference>
<dbReference type="EMBL" id="S68417">
    <property type="protein sequence ID" value="AAD14014.1"/>
    <property type="status" value="JOINED"/>
    <property type="molecule type" value="Genomic_DNA"/>
</dbReference>
<dbReference type="EMBL" id="S68418">
    <property type="protein sequence ID" value="AAD14014.1"/>
    <property type="status" value="JOINED"/>
    <property type="molecule type" value="Genomic_DNA"/>
</dbReference>
<dbReference type="EMBL" id="S68419">
    <property type="protein sequence ID" value="AAD14014.1"/>
    <property type="status" value="JOINED"/>
    <property type="molecule type" value="Genomic_DNA"/>
</dbReference>
<dbReference type="EMBL" id="S68420">
    <property type="protein sequence ID" value="AAD14014.1"/>
    <property type="status" value="JOINED"/>
    <property type="molecule type" value="Genomic_DNA"/>
</dbReference>
<dbReference type="EMBL" id="S68421">
    <property type="protein sequence ID" value="AAD14014.1"/>
    <property type="status" value="JOINED"/>
    <property type="molecule type" value="Genomic_DNA"/>
</dbReference>
<dbReference type="EMBL" id="S68422">
    <property type="protein sequence ID" value="AAD14014.1"/>
    <property type="status" value="JOINED"/>
    <property type="molecule type" value="Genomic_DNA"/>
</dbReference>
<dbReference type="EMBL" id="X76538">
    <property type="protein sequence ID" value="CAA54047.1"/>
    <property type="molecule type" value="mRNA"/>
</dbReference>
<dbReference type="EMBL" id="HQ205986">
    <property type="protein sequence ID" value="ADP91854.1"/>
    <property type="molecule type" value="Genomic_DNA"/>
</dbReference>
<dbReference type="EMBL" id="HQ205987">
    <property type="protein sequence ID" value="ADP91855.1"/>
    <property type="molecule type" value="Genomic_DNA"/>
</dbReference>
<dbReference type="EMBL" id="HQ205988">
    <property type="protein sequence ID" value="ADP91856.1"/>
    <property type="molecule type" value="Genomic_DNA"/>
</dbReference>
<dbReference type="EMBL" id="HQ205989">
    <property type="protein sequence ID" value="ADP91857.1"/>
    <property type="molecule type" value="Genomic_DNA"/>
</dbReference>
<dbReference type="EMBL" id="HQ205990">
    <property type="protein sequence ID" value="ADP91858.1"/>
    <property type="molecule type" value="Genomic_DNA"/>
</dbReference>
<dbReference type="EMBL" id="HQ205991">
    <property type="protein sequence ID" value="ADP91859.1"/>
    <property type="molecule type" value="Genomic_DNA"/>
</dbReference>
<dbReference type="EMBL" id="HQ205992">
    <property type="protein sequence ID" value="ADP91860.1"/>
    <property type="molecule type" value="Genomic_DNA"/>
</dbReference>
<dbReference type="EMBL" id="HQ205993">
    <property type="protein sequence ID" value="ADP91861.1"/>
    <property type="molecule type" value="Genomic_DNA"/>
</dbReference>
<dbReference type="EMBL" id="HQ205994">
    <property type="protein sequence ID" value="ADP91862.1"/>
    <property type="molecule type" value="Genomic_DNA"/>
</dbReference>
<dbReference type="EMBL" id="HQ205995">
    <property type="protein sequence ID" value="ADP91863.1"/>
    <property type="molecule type" value="Genomic_DNA"/>
</dbReference>
<dbReference type="EMBL" id="HQ205996">
    <property type="protein sequence ID" value="ADP91864.1"/>
    <property type="molecule type" value="Genomic_DNA"/>
</dbReference>
<dbReference type="EMBL" id="HQ205997">
    <property type="protein sequence ID" value="ADP91865.1"/>
    <property type="molecule type" value="Genomic_DNA"/>
</dbReference>
<dbReference type="EMBL" id="HQ205998">
    <property type="protein sequence ID" value="ADP91866.1"/>
    <property type="molecule type" value="Genomic_DNA"/>
</dbReference>
<dbReference type="EMBL" id="HQ205999">
    <property type="protein sequence ID" value="ADP91867.1"/>
    <property type="molecule type" value="Genomic_DNA"/>
</dbReference>
<dbReference type="EMBL" id="HQ206000">
    <property type="protein sequence ID" value="ADP91868.1"/>
    <property type="molecule type" value="Genomic_DNA"/>
</dbReference>
<dbReference type="EMBL" id="HQ206001">
    <property type="protein sequence ID" value="ADP91869.1"/>
    <property type="molecule type" value="Genomic_DNA"/>
</dbReference>
<dbReference type="EMBL" id="HQ206002">
    <property type="protein sequence ID" value="ADP91870.1"/>
    <property type="molecule type" value="Genomic_DNA"/>
</dbReference>
<dbReference type="EMBL" id="HQ206003">
    <property type="protein sequence ID" value="ADP91871.1"/>
    <property type="molecule type" value="Genomic_DNA"/>
</dbReference>
<dbReference type="EMBL" id="HQ206004">
    <property type="protein sequence ID" value="ADP91872.1"/>
    <property type="molecule type" value="Genomic_DNA"/>
</dbReference>
<dbReference type="EMBL" id="HQ206005">
    <property type="protein sequence ID" value="ADP91873.1"/>
    <property type="molecule type" value="Genomic_DNA"/>
</dbReference>
<dbReference type="EMBL" id="HQ206006">
    <property type="protein sequence ID" value="ADP91874.1"/>
    <property type="molecule type" value="Genomic_DNA"/>
</dbReference>
<dbReference type="EMBL" id="HQ206007">
    <property type="protein sequence ID" value="ADP91875.1"/>
    <property type="molecule type" value="Genomic_DNA"/>
</dbReference>
<dbReference type="EMBL" id="HQ206008">
    <property type="protein sequence ID" value="ADP91876.1"/>
    <property type="molecule type" value="Genomic_DNA"/>
</dbReference>
<dbReference type="EMBL" id="HQ206009">
    <property type="protein sequence ID" value="ADP91877.1"/>
    <property type="molecule type" value="Genomic_DNA"/>
</dbReference>
<dbReference type="EMBL" id="HQ206010">
    <property type="protein sequence ID" value="ADP91878.1"/>
    <property type="molecule type" value="Genomic_DNA"/>
</dbReference>
<dbReference type="EMBL" id="HQ206011">
    <property type="protein sequence ID" value="ADP91879.1"/>
    <property type="molecule type" value="Genomic_DNA"/>
</dbReference>
<dbReference type="EMBL" id="HQ206012">
    <property type="protein sequence ID" value="ADP91880.1"/>
    <property type="molecule type" value="Genomic_DNA"/>
</dbReference>
<dbReference type="EMBL" id="HQ206013">
    <property type="protein sequence ID" value="ADP91881.1"/>
    <property type="molecule type" value="Genomic_DNA"/>
</dbReference>
<dbReference type="EMBL" id="HQ206014">
    <property type="protein sequence ID" value="ADP91882.1"/>
    <property type="molecule type" value="Genomic_DNA"/>
</dbReference>
<dbReference type="EMBL" id="HQ206015">
    <property type="protein sequence ID" value="ADP91883.1"/>
    <property type="molecule type" value="Genomic_DNA"/>
</dbReference>
<dbReference type="EMBL" id="HQ206016">
    <property type="protein sequence ID" value="ADP91884.1"/>
    <property type="molecule type" value="Genomic_DNA"/>
</dbReference>
<dbReference type="EMBL" id="HQ206017">
    <property type="protein sequence ID" value="ADP91885.1"/>
    <property type="molecule type" value="Genomic_DNA"/>
</dbReference>
<dbReference type="EMBL" id="HQ206018">
    <property type="protein sequence ID" value="ADP91886.1"/>
    <property type="molecule type" value="Genomic_DNA"/>
</dbReference>
<dbReference type="EMBL" id="HQ206019">
    <property type="protein sequence ID" value="ADP91887.1"/>
    <property type="molecule type" value="Genomic_DNA"/>
</dbReference>
<dbReference type="EMBL" id="HQ206020">
    <property type="protein sequence ID" value="ADP91888.1"/>
    <property type="molecule type" value="Genomic_DNA"/>
</dbReference>
<dbReference type="EMBL" id="HQ206021">
    <property type="protein sequence ID" value="ADP91889.1"/>
    <property type="molecule type" value="Genomic_DNA"/>
</dbReference>
<dbReference type="EMBL" id="HQ206022">
    <property type="protein sequence ID" value="ADP91890.1"/>
    <property type="molecule type" value="Genomic_DNA"/>
</dbReference>
<dbReference type="EMBL" id="HQ206023">
    <property type="protein sequence ID" value="ADP91891.1"/>
    <property type="molecule type" value="Genomic_DNA"/>
</dbReference>
<dbReference type="EMBL" id="HQ206024">
    <property type="protein sequence ID" value="ADP91892.1"/>
    <property type="molecule type" value="Genomic_DNA"/>
</dbReference>
<dbReference type="EMBL" id="HQ206025">
    <property type="protein sequence ID" value="ADP91893.1"/>
    <property type="molecule type" value="Genomic_DNA"/>
</dbReference>
<dbReference type="EMBL" id="AC013413">
    <property type="protein sequence ID" value="AAY24298.1"/>
    <property type="molecule type" value="Genomic_DNA"/>
</dbReference>
<dbReference type="EMBL" id="CH471053">
    <property type="protein sequence ID" value="EAX00600.1"/>
    <property type="molecule type" value="Genomic_DNA"/>
</dbReference>
<dbReference type="EMBL" id="CH471053">
    <property type="protein sequence ID" value="EAX00602.1"/>
    <property type="molecule type" value="Genomic_DNA"/>
</dbReference>
<dbReference type="EMBL" id="BC001115">
    <property type="protein sequence ID" value="AAH01115.1"/>
    <property type="molecule type" value="mRNA"/>
</dbReference>
<dbReference type="EMBL" id="BC016289">
    <property type="protein sequence ID" value="AAH16289.2"/>
    <property type="molecule type" value="mRNA"/>
</dbReference>
<dbReference type="CCDS" id="CCDS1748.1"/>
<dbReference type="PIR" id="S45343">
    <property type="entry name" value="S45343"/>
</dbReference>
<dbReference type="RefSeq" id="NP_002428.1">
    <property type="nucleotide sequence ID" value="NM_002437.5"/>
</dbReference>
<dbReference type="RefSeq" id="XP_005264383.1">
    <property type="nucleotide sequence ID" value="XM_005264326.5"/>
</dbReference>
<dbReference type="RefSeq" id="XP_054198103.1">
    <property type="nucleotide sequence ID" value="XM_054342128.1"/>
</dbReference>
<dbReference type="BioGRID" id="110498">
    <property type="interactions" value="58"/>
</dbReference>
<dbReference type="FunCoup" id="P39210">
    <property type="interactions" value="1081"/>
</dbReference>
<dbReference type="IntAct" id="P39210">
    <property type="interactions" value="2"/>
</dbReference>
<dbReference type="STRING" id="9606.ENSP00000369383"/>
<dbReference type="TCDB" id="1.A.126.1.1">
    <property type="family name" value="the mpv17/pmp22 4 tms putative channel (mpv17) family"/>
</dbReference>
<dbReference type="iPTMnet" id="P39210"/>
<dbReference type="PhosphoSitePlus" id="P39210"/>
<dbReference type="SwissPalm" id="P39210"/>
<dbReference type="BioMuta" id="MPV17"/>
<dbReference type="jPOST" id="P39210"/>
<dbReference type="MassIVE" id="P39210"/>
<dbReference type="PaxDb" id="9606-ENSP00000369383"/>
<dbReference type="PeptideAtlas" id="P39210"/>
<dbReference type="ProteomicsDB" id="55316"/>
<dbReference type="Pumba" id="P39210"/>
<dbReference type="TopDownProteomics" id="P39210"/>
<dbReference type="Antibodypedia" id="28381">
    <property type="antibodies" value="177 antibodies from 27 providers"/>
</dbReference>
<dbReference type="DNASU" id="4358"/>
<dbReference type="Ensembl" id="ENST00000233545.6">
    <property type="protein sequence ID" value="ENSP00000233545.2"/>
    <property type="gene ID" value="ENSG00000115204.15"/>
</dbReference>
<dbReference type="Ensembl" id="ENST00000380044.6">
    <property type="protein sequence ID" value="ENSP00000369383.1"/>
    <property type="gene ID" value="ENSG00000115204.15"/>
</dbReference>
<dbReference type="GeneID" id="4358"/>
<dbReference type="KEGG" id="hsa:4358"/>
<dbReference type="MANE-Select" id="ENST00000380044.6">
    <property type="protein sequence ID" value="ENSP00000369383.1"/>
    <property type="RefSeq nucleotide sequence ID" value="NM_002437.5"/>
    <property type="RefSeq protein sequence ID" value="NP_002428.1"/>
</dbReference>
<dbReference type="UCSC" id="uc002rjr.3">
    <property type="organism name" value="human"/>
</dbReference>
<dbReference type="AGR" id="HGNC:7224"/>
<dbReference type="CTD" id="4358"/>
<dbReference type="DisGeNET" id="4358"/>
<dbReference type="GeneCards" id="MPV17"/>
<dbReference type="GeneReviews" id="MPV17"/>
<dbReference type="HGNC" id="HGNC:7224">
    <property type="gene designation" value="MPV17"/>
</dbReference>
<dbReference type="HPA" id="ENSG00000115204">
    <property type="expression patterns" value="Low tissue specificity"/>
</dbReference>
<dbReference type="MalaCards" id="MPV17"/>
<dbReference type="MIM" id="137960">
    <property type="type" value="gene"/>
</dbReference>
<dbReference type="MIM" id="256810">
    <property type="type" value="phenotype"/>
</dbReference>
<dbReference type="MIM" id="618400">
    <property type="type" value="phenotype"/>
</dbReference>
<dbReference type="neXtProt" id="NX_P39210"/>
<dbReference type="OpenTargets" id="ENSG00000115204"/>
<dbReference type="Orphanet" id="255229">
    <property type="disease" value="Navajo neurohepatopathy"/>
</dbReference>
<dbReference type="PharmGKB" id="PA30929"/>
<dbReference type="VEuPathDB" id="HostDB:ENSG00000115204"/>
<dbReference type="eggNOG" id="KOG1944">
    <property type="taxonomic scope" value="Eukaryota"/>
</dbReference>
<dbReference type="GeneTree" id="ENSGT00940000160891"/>
<dbReference type="InParanoid" id="P39210"/>
<dbReference type="OMA" id="WYQSKLA"/>
<dbReference type="OrthoDB" id="430207at2759"/>
<dbReference type="PAN-GO" id="P39210">
    <property type="GO annotations" value="1 GO annotation based on evolutionary models"/>
</dbReference>
<dbReference type="PhylomeDB" id="P39210"/>
<dbReference type="TreeFam" id="TF324070"/>
<dbReference type="PathwayCommons" id="P39210"/>
<dbReference type="Reactome" id="R-HSA-9033241">
    <property type="pathway name" value="Peroxisomal protein import"/>
</dbReference>
<dbReference type="SignaLink" id="P39210"/>
<dbReference type="BioGRID-ORCS" id="4358">
    <property type="hits" value="14 hits in 1157 CRISPR screens"/>
</dbReference>
<dbReference type="ChiTaRS" id="MPV17">
    <property type="organism name" value="human"/>
</dbReference>
<dbReference type="GeneWiki" id="MPV17"/>
<dbReference type="GenomeRNAi" id="4358"/>
<dbReference type="Pharos" id="P39210">
    <property type="development level" value="Tbio"/>
</dbReference>
<dbReference type="PRO" id="PR:P39210"/>
<dbReference type="Proteomes" id="UP000005640">
    <property type="component" value="Chromosome 2"/>
</dbReference>
<dbReference type="RNAct" id="P39210">
    <property type="molecule type" value="protein"/>
</dbReference>
<dbReference type="Bgee" id="ENSG00000115204">
    <property type="expression patterns" value="Expressed in right adrenal gland and 196 other cell types or tissues"/>
</dbReference>
<dbReference type="ExpressionAtlas" id="P39210">
    <property type="expression patterns" value="baseline and differential"/>
</dbReference>
<dbReference type="GO" id="GO:0005737">
    <property type="term" value="C:cytoplasm"/>
    <property type="evidence" value="ECO:0000318"/>
    <property type="project" value="GO_Central"/>
</dbReference>
<dbReference type="GO" id="GO:0005829">
    <property type="term" value="C:cytosol"/>
    <property type="evidence" value="ECO:0000304"/>
    <property type="project" value="Reactome"/>
</dbReference>
<dbReference type="GO" id="GO:0005743">
    <property type="term" value="C:mitochondrial inner membrane"/>
    <property type="evidence" value="ECO:0000314"/>
    <property type="project" value="UniProtKB"/>
</dbReference>
<dbReference type="GO" id="GO:0005739">
    <property type="term" value="C:mitochondrion"/>
    <property type="evidence" value="ECO:0000314"/>
    <property type="project" value="MGI"/>
</dbReference>
<dbReference type="GO" id="GO:0005778">
    <property type="term" value="C:peroxisomal membrane"/>
    <property type="evidence" value="ECO:0000304"/>
    <property type="project" value="Reactome"/>
</dbReference>
<dbReference type="GO" id="GO:0005777">
    <property type="term" value="C:peroxisome"/>
    <property type="evidence" value="ECO:0000303"/>
    <property type="project" value="UniProtKB"/>
</dbReference>
<dbReference type="GO" id="GO:0015267">
    <property type="term" value="F:channel activity"/>
    <property type="evidence" value="ECO:0000315"/>
    <property type="project" value="UniProtKB"/>
</dbReference>
<dbReference type="GO" id="GO:0034614">
    <property type="term" value="P:cellular response to reactive oxygen species"/>
    <property type="evidence" value="ECO:0000250"/>
    <property type="project" value="UniProtKB"/>
</dbReference>
<dbReference type="GO" id="GO:0032836">
    <property type="term" value="P:glomerular basement membrane development"/>
    <property type="evidence" value="ECO:0000250"/>
    <property type="project" value="UniProtKB"/>
</dbReference>
<dbReference type="GO" id="GO:0042592">
    <property type="term" value="P:homeostatic process"/>
    <property type="evidence" value="ECO:0000315"/>
    <property type="project" value="UniProtKB"/>
</dbReference>
<dbReference type="GO" id="GO:0048839">
    <property type="term" value="P:inner ear development"/>
    <property type="evidence" value="ECO:0000250"/>
    <property type="project" value="UniProtKB"/>
</dbReference>
<dbReference type="GO" id="GO:0000002">
    <property type="term" value="P:mitochondrial genome maintenance"/>
    <property type="evidence" value="ECO:0000315"/>
    <property type="project" value="UniProtKB"/>
</dbReference>
<dbReference type="GO" id="GO:1901858">
    <property type="term" value="P:regulation of mitochondrial DNA metabolic process"/>
    <property type="evidence" value="ECO:0000315"/>
    <property type="project" value="UniProtKB"/>
</dbReference>
<dbReference type="GO" id="GO:2000377">
    <property type="term" value="P:regulation of reactive oxygen species metabolic process"/>
    <property type="evidence" value="ECO:0000250"/>
    <property type="project" value="UniProtKB"/>
</dbReference>
<dbReference type="InterPro" id="IPR007248">
    <property type="entry name" value="Mpv17_PMP22"/>
</dbReference>
<dbReference type="PANTHER" id="PTHR11266">
    <property type="entry name" value="PEROXISOMAL MEMBRANE PROTEIN 2, PXMP2 MPV17"/>
    <property type="match status" value="1"/>
</dbReference>
<dbReference type="PANTHER" id="PTHR11266:SF17">
    <property type="entry name" value="PROTEIN MPV17"/>
    <property type="match status" value="1"/>
</dbReference>
<dbReference type="Pfam" id="PF04117">
    <property type="entry name" value="Mpv17_PMP22"/>
    <property type="match status" value="1"/>
</dbReference>
<keyword id="KW-0144">Charcot-Marie-Tooth disease</keyword>
<keyword id="KW-0225">Disease variant</keyword>
<keyword id="KW-0472">Membrane</keyword>
<keyword id="KW-0496">Mitochondrion</keyword>
<keyword id="KW-0999">Mitochondrion inner membrane</keyword>
<keyword id="KW-0523">Neurodegeneration</keyword>
<keyword id="KW-0622">Neuropathy</keyword>
<keyword id="KW-1274">Primary mitochondrial disease</keyword>
<keyword id="KW-1267">Proteomics identification</keyword>
<keyword id="KW-1185">Reference proteome</keyword>
<keyword id="KW-0812">Transmembrane</keyword>
<keyword id="KW-1133">Transmembrane helix</keyword>